<comment type="function">
    <text evidence="1">Key component of the proton channel; it plays a direct role in the translocation of protons across the membrane.</text>
</comment>
<comment type="subunit">
    <text evidence="1">F-type ATPases have 2 components, CF(1) - the catalytic core - and CF(0) - the membrane proton channel. CF(1) has five subunits: alpha(3), beta(3), gamma(1), delta(1), epsilon(1). CF(0) has three main subunits: a(1), b(2) and c(9-12). The alpha and beta chains form an alternating ring which encloses part of the gamma chain. CF(1) is attached to CF(0) by a central stalk formed by the gamma and epsilon chains, while a peripheral stalk is formed by the delta and b chains.</text>
</comment>
<comment type="subcellular location">
    <subcellularLocation>
        <location evidence="1">Cell inner membrane</location>
        <topology evidence="1">Multi-pass membrane protein</topology>
    </subcellularLocation>
</comment>
<comment type="similarity">
    <text evidence="1">Belongs to the ATPase A chain family.</text>
</comment>
<gene>
    <name evidence="1" type="primary">atpB</name>
    <name type="ordered locus">E2348C_4048</name>
</gene>
<organism>
    <name type="scientific">Escherichia coli O127:H6 (strain E2348/69 / EPEC)</name>
    <dbReference type="NCBI Taxonomy" id="574521"/>
    <lineage>
        <taxon>Bacteria</taxon>
        <taxon>Pseudomonadati</taxon>
        <taxon>Pseudomonadota</taxon>
        <taxon>Gammaproteobacteria</taxon>
        <taxon>Enterobacterales</taxon>
        <taxon>Enterobacteriaceae</taxon>
        <taxon>Escherichia</taxon>
    </lineage>
</organism>
<name>ATP6_ECO27</name>
<keyword id="KW-0066">ATP synthesis</keyword>
<keyword id="KW-0997">Cell inner membrane</keyword>
<keyword id="KW-1003">Cell membrane</keyword>
<keyword id="KW-0138">CF(0)</keyword>
<keyword id="KW-0375">Hydrogen ion transport</keyword>
<keyword id="KW-0406">Ion transport</keyword>
<keyword id="KW-0472">Membrane</keyword>
<keyword id="KW-1185">Reference proteome</keyword>
<keyword id="KW-0812">Transmembrane</keyword>
<keyword id="KW-1133">Transmembrane helix</keyword>
<keyword id="KW-0813">Transport</keyword>
<accession>B7UMK3</accession>
<feature type="chain" id="PRO_1000184280" description="ATP synthase subunit a">
    <location>
        <begin position="1"/>
        <end position="271"/>
    </location>
</feature>
<feature type="transmembrane region" description="Helical" evidence="1">
    <location>
        <begin position="40"/>
        <end position="60"/>
    </location>
</feature>
<feature type="transmembrane region" description="Helical" evidence="1">
    <location>
        <begin position="100"/>
        <end position="120"/>
    </location>
</feature>
<feature type="transmembrane region" description="Helical" evidence="1">
    <location>
        <begin position="146"/>
        <end position="166"/>
    </location>
</feature>
<feature type="transmembrane region" description="Helical" evidence="1">
    <location>
        <begin position="220"/>
        <end position="240"/>
    </location>
</feature>
<feature type="transmembrane region" description="Helical" evidence="1">
    <location>
        <begin position="242"/>
        <end position="262"/>
    </location>
</feature>
<protein>
    <recommendedName>
        <fullName evidence="1">ATP synthase subunit a</fullName>
    </recommendedName>
    <alternativeName>
        <fullName evidence="1">ATP synthase F0 sector subunit a</fullName>
    </alternativeName>
    <alternativeName>
        <fullName evidence="1">F-ATPase subunit 6</fullName>
    </alternativeName>
</protein>
<sequence>MASENMTPQDYIGHHLNNLQLDLRTFSLVDPHNPPATFWTINIDSMFFSVVLGLLFLVLFRSVAKKATSGVPGKFQTAIELVIGFVNGSVKDMYHGKSKLIAPLALTIFVWVFLMNLMDLLPIDLLPYIAEHVLGLPALRVVPSADVNVTLSMALGVFILILFYSIKMKGIGGFTKELTLQPFNHWAFIPVNLILEGVSLLSKPVSLGLRLFGNMYAGELIFILIAGLLPWWSQWILNVPWAIFHILIITLQAFIFMVLTIVYLSMASEEH</sequence>
<evidence type="ECO:0000255" key="1">
    <source>
        <dbReference type="HAMAP-Rule" id="MF_01393"/>
    </source>
</evidence>
<dbReference type="EMBL" id="FM180568">
    <property type="protein sequence ID" value="CAS11596.1"/>
    <property type="molecule type" value="Genomic_DNA"/>
</dbReference>
<dbReference type="RefSeq" id="WP_000135618.1">
    <property type="nucleotide sequence ID" value="NC_011601.1"/>
</dbReference>
<dbReference type="SMR" id="B7UMK3"/>
<dbReference type="GeneID" id="86948620"/>
<dbReference type="KEGG" id="ecg:E2348C_4048"/>
<dbReference type="HOGENOM" id="CLU_041018_1_0_6"/>
<dbReference type="Proteomes" id="UP000008205">
    <property type="component" value="Chromosome"/>
</dbReference>
<dbReference type="GO" id="GO:0005886">
    <property type="term" value="C:plasma membrane"/>
    <property type="evidence" value="ECO:0007669"/>
    <property type="project" value="UniProtKB-SubCell"/>
</dbReference>
<dbReference type="GO" id="GO:0045259">
    <property type="term" value="C:proton-transporting ATP synthase complex"/>
    <property type="evidence" value="ECO:0007669"/>
    <property type="project" value="UniProtKB-KW"/>
</dbReference>
<dbReference type="GO" id="GO:0046933">
    <property type="term" value="F:proton-transporting ATP synthase activity, rotational mechanism"/>
    <property type="evidence" value="ECO:0007669"/>
    <property type="project" value="UniProtKB-UniRule"/>
</dbReference>
<dbReference type="GO" id="GO:0042777">
    <property type="term" value="P:proton motive force-driven plasma membrane ATP synthesis"/>
    <property type="evidence" value="ECO:0007669"/>
    <property type="project" value="TreeGrafter"/>
</dbReference>
<dbReference type="CDD" id="cd00310">
    <property type="entry name" value="ATP-synt_Fo_a_6"/>
    <property type="match status" value="1"/>
</dbReference>
<dbReference type="FunFam" id="1.20.120.220:FF:000002">
    <property type="entry name" value="ATP synthase subunit a"/>
    <property type="match status" value="1"/>
</dbReference>
<dbReference type="Gene3D" id="1.20.120.220">
    <property type="entry name" value="ATP synthase, F0 complex, subunit A"/>
    <property type="match status" value="1"/>
</dbReference>
<dbReference type="HAMAP" id="MF_01393">
    <property type="entry name" value="ATP_synth_a_bact"/>
    <property type="match status" value="1"/>
</dbReference>
<dbReference type="InterPro" id="IPR045082">
    <property type="entry name" value="ATP_syn_F0_a_bact/chloroplast"/>
</dbReference>
<dbReference type="InterPro" id="IPR000568">
    <property type="entry name" value="ATP_synth_F0_asu"/>
</dbReference>
<dbReference type="InterPro" id="IPR023011">
    <property type="entry name" value="ATP_synth_F0_asu_AS"/>
</dbReference>
<dbReference type="InterPro" id="IPR035908">
    <property type="entry name" value="F0_ATP_A_sf"/>
</dbReference>
<dbReference type="NCBIfam" id="TIGR01131">
    <property type="entry name" value="ATP_synt_6_or_A"/>
    <property type="match status" value="1"/>
</dbReference>
<dbReference type="NCBIfam" id="NF004477">
    <property type="entry name" value="PRK05815.1-1"/>
    <property type="match status" value="1"/>
</dbReference>
<dbReference type="PANTHER" id="PTHR42823">
    <property type="entry name" value="ATP SYNTHASE SUBUNIT A, CHLOROPLASTIC"/>
    <property type="match status" value="1"/>
</dbReference>
<dbReference type="PANTHER" id="PTHR42823:SF3">
    <property type="entry name" value="ATP SYNTHASE SUBUNIT A, CHLOROPLASTIC"/>
    <property type="match status" value="1"/>
</dbReference>
<dbReference type="Pfam" id="PF00119">
    <property type="entry name" value="ATP-synt_A"/>
    <property type="match status" value="1"/>
</dbReference>
<dbReference type="PRINTS" id="PR00123">
    <property type="entry name" value="ATPASEA"/>
</dbReference>
<dbReference type="SUPFAM" id="SSF81336">
    <property type="entry name" value="F1F0 ATP synthase subunit A"/>
    <property type="match status" value="1"/>
</dbReference>
<dbReference type="PROSITE" id="PS00449">
    <property type="entry name" value="ATPASE_A"/>
    <property type="match status" value="1"/>
</dbReference>
<proteinExistence type="inferred from homology"/>
<reference key="1">
    <citation type="journal article" date="2009" name="J. Bacteriol.">
        <title>Complete genome sequence and comparative genome analysis of enteropathogenic Escherichia coli O127:H6 strain E2348/69.</title>
        <authorList>
            <person name="Iguchi A."/>
            <person name="Thomson N.R."/>
            <person name="Ogura Y."/>
            <person name="Saunders D."/>
            <person name="Ooka T."/>
            <person name="Henderson I.R."/>
            <person name="Harris D."/>
            <person name="Asadulghani M."/>
            <person name="Kurokawa K."/>
            <person name="Dean P."/>
            <person name="Kenny B."/>
            <person name="Quail M.A."/>
            <person name="Thurston S."/>
            <person name="Dougan G."/>
            <person name="Hayashi T."/>
            <person name="Parkhill J."/>
            <person name="Frankel G."/>
        </authorList>
    </citation>
    <scope>NUCLEOTIDE SEQUENCE [LARGE SCALE GENOMIC DNA]</scope>
    <source>
        <strain>E2348/69 / EPEC</strain>
    </source>
</reference>